<gene>
    <name evidence="1" type="primary">rplO</name>
    <name type="synonym">rpl15</name>
    <name type="ordered locus">syc1882_d</name>
</gene>
<dbReference type="EMBL" id="AB000111">
    <property type="protein sequence ID" value="BAA22466.1"/>
    <property type="molecule type" value="Genomic_DNA"/>
</dbReference>
<dbReference type="EMBL" id="AP008231">
    <property type="protein sequence ID" value="BAD80072.1"/>
    <property type="molecule type" value="Genomic_DNA"/>
</dbReference>
<dbReference type="RefSeq" id="WP_011244192.1">
    <property type="nucleotide sequence ID" value="NZ_CP085785.1"/>
</dbReference>
<dbReference type="SMR" id="Q5N0U8"/>
<dbReference type="GeneID" id="72431098"/>
<dbReference type="KEGG" id="syc:syc1882_d"/>
<dbReference type="eggNOG" id="COG0200">
    <property type="taxonomic scope" value="Bacteria"/>
</dbReference>
<dbReference type="Proteomes" id="UP000001175">
    <property type="component" value="Chromosome"/>
</dbReference>
<dbReference type="GO" id="GO:0022625">
    <property type="term" value="C:cytosolic large ribosomal subunit"/>
    <property type="evidence" value="ECO:0007669"/>
    <property type="project" value="TreeGrafter"/>
</dbReference>
<dbReference type="GO" id="GO:0019843">
    <property type="term" value="F:rRNA binding"/>
    <property type="evidence" value="ECO:0007669"/>
    <property type="project" value="UniProtKB-UniRule"/>
</dbReference>
<dbReference type="GO" id="GO:0003735">
    <property type="term" value="F:structural constituent of ribosome"/>
    <property type="evidence" value="ECO:0007669"/>
    <property type="project" value="InterPro"/>
</dbReference>
<dbReference type="GO" id="GO:0006412">
    <property type="term" value="P:translation"/>
    <property type="evidence" value="ECO:0007669"/>
    <property type="project" value="UniProtKB-UniRule"/>
</dbReference>
<dbReference type="Gene3D" id="3.100.10.10">
    <property type="match status" value="1"/>
</dbReference>
<dbReference type="HAMAP" id="MF_01341">
    <property type="entry name" value="Ribosomal_uL15"/>
    <property type="match status" value="1"/>
</dbReference>
<dbReference type="InterPro" id="IPR030878">
    <property type="entry name" value="Ribosomal_uL15"/>
</dbReference>
<dbReference type="InterPro" id="IPR021131">
    <property type="entry name" value="Ribosomal_uL15/eL18"/>
</dbReference>
<dbReference type="InterPro" id="IPR036227">
    <property type="entry name" value="Ribosomal_uL15/eL18_sf"/>
</dbReference>
<dbReference type="InterPro" id="IPR005749">
    <property type="entry name" value="Ribosomal_uL15_bac-type"/>
</dbReference>
<dbReference type="InterPro" id="IPR001196">
    <property type="entry name" value="Ribosomal_uL15_CS"/>
</dbReference>
<dbReference type="NCBIfam" id="TIGR01071">
    <property type="entry name" value="rplO_bact"/>
    <property type="match status" value="1"/>
</dbReference>
<dbReference type="PANTHER" id="PTHR12934">
    <property type="entry name" value="50S RIBOSOMAL PROTEIN L15"/>
    <property type="match status" value="1"/>
</dbReference>
<dbReference type="PANTHER" id="PTHR12934:SF11">
    <property type="entry name" value="LARGE RIBOSOMAL SUBUNIT PROTEIN UL15M"/>
    <property type="match status" value="1"/>
</dbReference>
<dbReference type="Pfam" id="PF00828">
    <property type="entry name" value="Ribosomal_L27A"/>
    <property type="match status" value="1"/>
</dbReference>
<dbReference type="SUPFAM" id="SSF52080">
    <property type="entry name" value="Ribosomal proteins L15p and L18e"/>
    <property type="match status" value="1"/>
</dbReference>
<dbReference type="PROSITE" id="PS00475">
    <property type="entry name" value="RIBOSOMAL_L15"/>
    <property type="match status" value="1"/>
</dbReference>
<sequence length="147" mass="15289">MKLDNLAPQPGAKKRKRRVGRGIAAGQGASCGFGMRGQKSRSGRPTRPGFEGGQMPLYRRVPKLKHFPLINRKFYTVVNVGALAGLAAGTEVTLESLMAVGIVTQNDGPLKILGDGELSVSLSVSAAAFTATAQQKIEAAGGSIALV</sequence>
<proteinExistence type="inferred from homology"/>
<feature type="chain" id="PRO_0000104837" description="Large ribosomal subunit protein uL15">
    <location>
        <begin position="1"/>
        <end position="147"/>
    </location>
</feature>
<feature type="region of interest" description="Disordered" evidence="2">
    <location>
        <begin position="1"/>
        <end position="55"/>
    </location>
</feature>
<feature type="compositionally biased region" description="Gly residues" evidence="2">
    <location>
        <begin position="23"/>
        <end position="35"/>
    </location>
</feature>
<organism>
    <name type="scientific">Synechococcus sp. (strain ATCC 27144 / PCC 6301 / SAUG 1402/1)</name>
    <name type="common">Anacystis nidulans</name>
    <dbReference type="NCBI Taxonomy" id="269084"/>
    <lineage>
        <taxon>Bacteria</taxon>
        <taxon>Bacillati</taxon>
        <taxon>Cyanobacteriota</taxon>
        <taxon>Cyanophyceae</taxon>
        <taxon>Synechococcales</taxon>
        <taxon>Synechococcaceae</taxon>
        <taxon>Synechococcus</taxon>
    </lineage>
</organism>
<protein>
    <recommendedName>
        <fullName evidence="1">Large ribosomal subunit protein uL15</fullName>
    </recommendedName>
    <alternativeName>
        <fullName evidence="3">50S ribosomal protein L15</fullName>
    </alternativeName>
</protein>
<evidence type="ECO:0000255" key="1">
    <source>
        <dbReference type="HAMAP-Rule" id="MF_01341"/>
    </source>
</evidence>
<evidence type="ECO:0000256" key="2">
    <source>
        <dbReference type="SAM" id="MobiDB-lite"/>
    </source>
</evidence>
<evidence type="ECO:0000305" key="3"/>
<keyword id="KW-0687">Ribonucleoprotein</keyword>
<keyword id="KW-0689">Ribosomal protein</keyword>
<keyword id="KW-0694">RNA-binding</keyword>
<keyword id="KW-0699">rRNA-binding</keyword>
<comment type="function">
    <text evidence="1">Binds to the 23S rRNA.</text>
</comment>
<comment type="subunit">
    <text evidence="1">Part of the 50S ribosomal subunit.</text>
</comment>
<comment type="similarity">
    <text evidence="1">Belongs to the universal ribosomal protein uL15 family.</text>
</comment>
<reference key="1">
    <citation type="journal article" date="1997" name="Gene">
        <title>Organization of a large gene cluster encoding ribosomal proteins in the cyanobacterium Synechococcus sp. strain PCC 6301: comparison of gene clusters among cyanobacteria, eubacteria and chloroplast genomes.</title>
        <authorList>
            <person name="Sugita M."/>
            <person name="Sugishita H."/>
            <person name="Fujishiro T."/>
            <person name="Tsuboi M."/>
            <person name="Sugita C."/>
            <person name="Endo T."/>
            <person name="Sugiura M."/>
        </authorList>
    </citation>
    <scope>NUCLEOTIDE SEQUENCE [GENOMIC DNA]</scope>
</reference>
<reference key="2">
    <citation type="journal article" date="2007" name="Photosyn. Res.">
        <title>Complete nucleotide sequence of the freshwater unicellular cyanobacterium Synechococcus elongatus PCC 6301 chromosome: gene content and organization.</title>
        <authorList>
            <person name="Sugita C."/>
            <person name="Ogata K."/>
            <person name="Shikata M."/>
            <person name="Jikuya H."/>
            <person name="Takano J."/>
            <person name="Furumichi M."/>
            <person name="Kanehisa M."/>
            <person name="Omata T."/>
            <person name="Sugiura M."/>
            <person name="Sugita M."/>
        </authorList>
    </citation>
    <scope>NUCLEOTIDE SEQUENCE [LARGE SCALE GENOMIC DNA]</scope>
    <source>
        <strain>ATCC 27144 / PCC 6301 / SAUG 1402/1</strain>
    </source>
</reference>
<name>RL15_SYNP6</name>
<accession>Q5N0U8</accession>
<accession>Q9R7M9</accession>